<protein>
    <recommendedName>
        <fullName evidence="1">UDP-N-acetylmuramate--L-alanine ligase</fullName>
        <ecNumber evidence="1">6.3.2.8</ecNumber>
    </recommendedName>
    <alternativeName>
        <fullName evidence="1">UDP-N-acetylmuramoyl-L-alanine synthetase</fullName>
    </alternativeName>
</protein>
<dbReference type="EC" id="6.3.2.8" evidence="1"/>
<dbReference type="EMBL" id="CP000485">
    <property type="protein sequence ID" value="ABK87469.1"/>
    <property type="molecule type" value="Genomic_DNA"/>
</dbReference>
<dbReference type="RefSeq" id="WP_000219465.1">
    <property type="nucleotide sequence ID" value="NC_008600.1"/>
</dbReference>
<dbReference type="SMR" id="A0RJS6"/>
<dbReference type="GeneID" id="45024558"/>
<dbReference type="KEGG" id="btl:BALH_4262"/>
<dbReference type="HOGENOM" id="CLU_028104_1_0_9"/>
<dbReference type="UniPathway" id="UPA00219"/>
<dbReference type="GO" id="GO:0005737">
    <property type="term" value="C:cytoplasm"/>
    <property type="evidence" value="ECO:0007669"/>
    <property type="project" value="UniProtKB-SubCell"/>
</dbReference>
<dbReference type="GO" id="GO:0005524">
    <property type="term" value="F:ATP binding"/>
    <property type="evidence" value="ECO:0007669"/>
    <property type="project" value="UniProtKB-UniRule"/>
</dbReference>
<dbReference type="GO" id="GO:0008763">
    <property type="term" value="F:UDP-N-acetylmuramate-L-alanine ligase activity"/>
    <property type="evidence" value="ECO:0007669"/>
    <property type="project" value="UniProtKB-UniRule"/>
</dbReference>
<dbReference type="GO" id="GO:0051301">
    <property type="term" value="P:cell division"/>
    <property type="evidence" value="ECO:0007669"/>
    <property type="project" value="UniProtKB-KW"/>
</dbReference>
<dbReference type="GO" id="GO:0071555">
    <property type="term" value="P:cell wall organization"/>
    <property type="evidence" value="ECO:0007669"/>
    <property type="project" value="UniProtKB-KW"/>
</dbReference>
<dbReference type="GO" id="GO:0009252">
    <property type="term" value="P:peptidoglycan biosynthetic process"/>
    <property type="evidence" value="ECO:0007669"/>
    <property type="project" value="UniProtKB-UniRule"/>
</dbReference>
<dbReference type="GO" id="GO:0008360">
    <property type="term" value="P:regulation of cell shape"/>
    <property type="evidence" value="ECO:0007669"/>
    <property type="project" value="UniProtKB-KW"/>
</dbReference>
<dbReference type="Gene3D" id="3.90.190.20">
    <property type="entry name" value="Mur ligase, C-terminal domain"/>
    <property type="match status" value="1"/>
</dbReference>
<dbReference type="Gene3D" id="3.40.1190.10">
    <property type="entry name" value="Mur-like, catalytic domain"/>
    <property type="match status" value="1"/>
</dbReference>
<dbReference type="Gene3D" id="3.40.50.720">
    <property type="entry name" value="NAD(P)-binding Rossmann-like Domain"/>
    <property type="match status" value="1"/>
</dbReference>
<dbReference type="HAMAP" id="MF_00046">
    <property type="entry name" value="MurC"/>
    <property type="match status" value="1"/>
</dbReference>
<dbReference type="InterPro" id="IPR036565">
    <property type="entry name" value="Mur-like_cat_sf"/>
</dbReference>
<dbReference type="InterPro" id="IPR004101">
    <property type="entry name" value="Mur_ligase_C"/>
</dbReference>
<dbReference type="InterPro" id="IPR036615">
    <property type="entry name" value="Mur_ligase_C_dom_sf"/>
</dbReference>
<dbReference type="InterPro" id="IPR013221">
    <property type="entry name" value="Mur_ligase_cen"/>
</dbReference>
<dbReference type="InterPro" id="IPR000713">
    <property type="entry name" value="Mur_ligase_N"/>
</dbReference>
<dbReference type="InterPro" id="IPR050061">
    <property type="entry name" value="MurCDEF_pg_biosynth"/>
</dbReference>
<dbReference type="InterPro" id="IPR005758">
    <property type="entry name" value="UDP-N-AcMur_Ala_ligase_MurC"/>
</dbReference>
<dbReference type="NCBIfam" id="TIGR01082">
    <property type="entry name" value="murC"/>
    <property type="match status" value="1"/>
</dbReference>
<dbReference type="PANTHER" id="PTHR43445:SF3">
    <property type="entry name" value="UDP-N-ACETYLMURAMATE--L-ALANINE LIGASE"/>
    <property type="match status" value="1"/>
</dbReference>
<dbReference type="PANTHER" id="PTHR43445">
    <property type="entry name" value="UDP-N-ACETYLMURAMATE--L-ALANINE LIGASE-RELATED"/>
    <property type="match status" value="1"/>
</dbReference>
<dbReference type="Pfam" id="PF01225">
    <property type="entry name" value="Mur_ligase"/>
    <property type="match status" value="1"/>
</dbReference>
<dbReference type="Pfam" id="PF02875">
    <property type="entry name" value="Mur_ligase_C"/>
    <property type="match status" value="1"/>
</dbReference>
<dbReference type="Pfam" id="PF08245">
    <property type="entry name" value="Mur_ligase_M"/>
    <property type="match status" value="1"/>
</dbReference>
<dbReference type="SUPFAM" id="SSF51984">
    <property type="entry name" value="MurCD N-terminal domain"/>
    <property type="match status" value="1"/>
</dbReference>
<dbReference type="SUPFAM" id="SSF53623">
    <property type="entry name" value="MurD-like peptide ligases, catalytic domain"/>
    <property type="match status" value="1"/>
</dbReference>
<dbReference type="SUPFAM" id="SSF53244">
    <property type="entry name" value="MurD-like peptide ligases, peptide-binding domain"/>
    <property type="match status" value="1"/>
</dbReference>
<organism>
    <name type="scientific">Bacillus thuringiensis (strain Al Hakam)</name>
    <dbReference type="NCBI Taxonomy" id="412694"/>
    <lineage>
        <taxon>Bacteria</taxon>
        <taxon>Bacillati</taxon>
        <taxon>Bacillota</taxon>
        <taxon>Bacilli</taxon>
        <taxon>Bacillales</taxon>
        <taxon>Bacillaceae</taxon>
        <taxon>Bacillus</taxon>
        <taxon>Bacillus cereus group</taxon>
    </lineage>
</organism>
<keyword id="KW-0067">ATP-binding</keyword>
<keyword id="KW-0131">Cell cycle</keyword>
<keyword id="KW-0132">Cell division</keyword>
<keyword id="KW-0133">Cell shape</keyword>
<keyword id="KW-0961">Cell wall biogenesis/degradation</keyword>
<keyword id="KW-0963">Cytoplasm</keyword>
<keyword id="KW-0436">Ligase</keyword>
<keyword id="KW-0547">Nucleotide-binding</keyword>
<keyword id="KW-0573">Peptidoglycan synthesis</keyword>
<reference key="1">
    <citation type="journal article" date="2007" name="J. Bacteriol.">
        <title>The complete genome sequence of Bacillus thuringiensis Al Hakam.</title>
        <authorList>
            <person name="Challacombe J.F."/>
            <person name="Altherr M.R."/>
            <person name="Xie G."/>
            <person name="Bhotika S.S."/>
            <person name="Brown N."/>
            <person name="Bruce D."/>
            <person name="Campbell C.S."/>
            <person name="Campbell M.L."/>
            <person name="Chen J."/>
            <person name="Chertkov O."/>
            <person name="Cleland C."/>
            <person name="Dimitrijevic M."/>
            <person name="Doggett N.A."/>
            <person name="Fawcett J.J."/>
            <person name="Glavina T."/>
            <person name="Goodwin L.A."/>
            <person name="Green L.D."/>
            <person name="Han C.S."/>
            <person name="Hill K.K."/>
            <person name="Hitchcock P."/>
            <person name="Jackson P.J."/>
            <person name="Keim P."/>
            <person name="Kewalramani A.R."/>
            <person name="Longmire J."/>
            <person name="Lucas S."/>
            <person name="Malfatti S."/>
            <person name="Martinez D."/>
            <person name="McMurry K."/>
            <person name="Meincke L.J."/>
            <person name="Misra M."/>
            <person name="Moseman B.L."/>
            <person name="Mundt M."/>
            <person name="Munk A.C."/>
            <person name="Okinaka R.T."/>
            <person name="Parson-Quintana B."/>
            <person name="Reilly L.P."/>
            <person name="Richardson P."/>
            <person name="Robinson D.L."/>
            <person name="Saunders E."/>
            <person name="Tapia R."/>
            <person name="Tesmer J.G."/>
            <person name="Thayer N."/>
            <person name="Thompson L.S."/>
            <person name="Tice H."/>
            <person name="Ticknor L.O."/>
            <person name="Wills P.L."/>
            <person name="Gilna P."/>
            <person name="Brettin T.S."/>
        </authorList>
    </citation>
    <scope>NUCLEOTIDE SEQUENCE [LARGE SCALE GENOMIC DNA]</scope>
    <source>
        <strain>Al Hakam</strain>
    </source>
</reference>
<sequence>MTVYHFVGIKGTGMSSLAQILHDMKHTVQGSDYEKRFFTQTALEKRNISILPFDKSNVKEGQVIIAGNAFPDTHEEIVAAKELNIPVHRYHHFLGDLMNQYTSVAVTGAHGKTSTTGLLAHVMQGAHPTSYLIGDGTGHGVENSKYFVFEACEYRRHFLSYNPDYAIMTNIDFDHPDYFTDINDVFSAFQEMALQVKKGIIACGDDEELQKIQAKVPVIFYGFGEDNDFQARNIQKRTDGTIFDVFVRNTYYDTFKITGYGNHSVLNALAVIALCHYENVDVEAVKHQLTTFEGVKRRFNEKPMGEQVIIDDYAHHPTEINATIEAARQKHPEREIVAVFQPHTFSRTEKFLDEFAESLSKADQVYLCDIFGSARENKGELTIEDLQKRIDGAELITDTTTDVLKKHKNGVLIFMGAGDIQKFEAAYVKEVQVAEK</sequence>
<gene>
    <name evidence="1" type="primary">murC</name>
    <name type="ordered locus">BALH_4262</name>
</gene>
<feature type="chain" id="PRO_1000004310" description="UDP-N-acetylmuramate--L-alanine ligase">
    <location>
        <begin position="1"/>
        <end position="436"/>
    </location>
</feature>
<feature type="binding site" evidence="1">
    <location>
        <begin position="108"/>
        <end position="114"/>
    </location>
    <ligand>
        <name>ATP</name>
        <dbReference type="ChEBI" id="CHEBI:30616"/>
    </ligand>
</feature>
<evidence type="ECO:0000255" key="1">
    <source>
        <dbReference type="HAMAP-Rule" id="MF_00046"/>
    </source>
</evidence>
<proteinExistence type="inferred from homology"/>
<comment type="function">
    <text evidence="1">Cell wall formation.</text>
</comment>
<comment type="catalytic activity">
    <reaction evidence="1">
        <text>UDP-N-acetyl-alpha-D-muramate + L-alanine + ATP = UDP-N-acetyl-alpha-D-muramoyl-L-alanine + ADP + phosphate + H(+)</text>
        <dbReference type="Rhea" id="RHEA:23372"/>
        <dbReference type="ChEBI" id="CHEBI:15378"/>
        <dbReference type="ChEBI" id="CHEBI:30616"/>
        <dbReference type="ChEBI" id="CHEBI:43474"/>
        <dbReference type="ChEBI" id="CHEBI:57972"/>
        <dbReference type="ChEBI" id="CHEBI:70757"/>
        <dbReference type="ChEBI" id="CHEBI:83898"/>
        <dbReference type="ChEBI" id="CHEBI:456216"/>
        <dbReference type="EC" id="6.3.2.8"/>
    </reaction>
</comment>
<comment type="pathway">
    <text evidence="1">Cell wall biogenesis; peptidoglycan biosynthesis.</text>
</comment>
<comment type="subcellular location">
    <subcellularLocation>
        <location evidence="1">Cytoplasm</location>
    </subcellularLocation>
</comment>
<comment type="similarity">
    <text evidence="1">Belongs to the MurCDEF family.</text>
</comment>
<accession>A0RJS6</accession>
<name>MURC_BACAH</name>